<accession>Q67R57</accession>
<reference key="1">
    <citation type="journal article" date="2004" name="Nucleic Acids Res.">
        <title>Genome sequence of Symbiobacterium thermophilum, an uncultivable bacterium that depends on microbial commensalism.</title>
        <authorList>
            <person name="Ueda K."/>
            <person name="Yamashita A."/>
            <person name="Ishikawa J."/>
            <person name="Shimada M."/>
            <person name="Watsuji T."/>
            <person name="Morimura K."/>
            <person name="Ikeda H."/>
            <person name="Hattori M."/>
            <person name="Beppu T."/>
        </authorList>
    </citation>
    <scope>NUCLEOTIDE SEQUENCE [LARGE SCALE GENOMIC DNA]</scope>
    <source>
        <strain>DSM 24528 / JCM 14929 / IAM 14863 / T</strain>
    </source>
</reference>
<protein>
    <recommendedName>
        <fullName evidence="1">Dephospho-CoA kinase</fullName>
        <ecNumber evidence="1">2.7.1.24</ecNumber>
    </recommendedName>
    <alternativeName>
        <fullName evidence="1">Dephosphocoenzyme A kinase</fullName>
    </alternativeName>
</protein>
<organism>
    <name type="scientific">Symbiobacterium thermophilum (strain DSM 24528 / JCM 14929 / IAM 14863 / T)</name>
    <dbReference type="NCBI Taxonomy" id="292459"/>
    <lineage>
        <taxon>Bacteria</taxon>
        <taxon>Bacillati</taxon>
        <taxon>Bacillota</taxon>
        <taxon>Clostridia</taxon>
        <taxon>Eubacteriales</taxon>
        <taxon>Symbiobacteriaceae</taxon>
        <taxon>Symbiobacterium</taxon>
    </lineage>
</organism>
<gene>
    <name evidence="1" type="primary">coaE</name>
    <name type="ordered locus">STH851</name>
</gene>
<proteinExistence type="inferred from homology"/>
<feature type="chain" id="PRO_0000243350" description="Dephospho-CoA kinase">
    <location>
        <begin position="1"/>
        <end position="239"/>
    </location>
</feature>
<feature type="domain" description="DPCK" evidence="1">
    <location>
        <begin position="3"/>
        <end position="206"/>
    </location>
</feature>
<feature type="region of interest" description="Disordered" evidence="2">
    <location>
        <begin position="197"/>
        <end position="239"/>
    </location>
</feature>
<feature type="compositionally biased region" description="Low complexity" evidence="2">
    <location>
        <begin position="204"/>
        <end position="230"/>
    </location>
</feature>
<feature type="binding site" evidence="1">
    <location>
        <begin position="11"/>
        <end position="16"/>
    </location>
    <ligand>
        <name>ATP</name>
        <dbReference type="ChEBI" id="CHEBI:30616"/>
    </ligand>
</feature>
<keyword id="KW-0067">ATP-binding</keyword>
<keyword id="KW-0173">Coenzyme A biosynthesis</keyword>
<keyword id="KW-0963">Cytoplasm</keyword>
<keyword id="KW-0418">Kinase</keyword>
<keyword id="KW-0547">Nucleotide-binding</keyword>
<keyword id="KW-1185">Reference proteome</keyword>
<keyword id="KW-0808">Transferase</keyword>
<comment type="function">
    <text evidence="1">Catalyzes the phosphorylation of the 3'-hydroxyl group of dephosphocoenzyme A to form coenzyme A.</text>
</comment>
<comment type="catalytic activity">
    <reaction evidence="1">
        <text>3'-dephospho-CoA + ATP = ADP + CoA + H(+)</text>
        <dbReference type="Rhea" id="RHEA:18245"/>
        <dbReference type="ChEBI" id="CHEBI:15378"/>
        <dbReference type="ChEBI" id="CHEBI:30616"/>
        <dbReference type="ChEBI" id="CHEBI:57287"/>
        <dbReference type="ChEBI" id="CHEBI:57328"/>
        <dbReference type="ChEBI" id="CHEBI:456216"/>
        <dbReference type="EC" id="2.7.1.24"/>
    </reaction>
</comment>
<comment type="pathway">
    <text evidence="1">Cofactor biosynthesis; coenzyme A biosynthesis; CoA from (R)-pantothenate: step 5/5.</text>
</comment>
<comment type="subcellular location">
    <subcellularLocation>
        <location evidence="1">Cytoplasm</location>
    </subcellularLocation>
</comment>
<comment type="similarity">
    <text evidence="1">Belongs to the CoaE family.</text>
</comment>
<name>COAE_SYMTH</name>
<sequence length="239" mass="25541">MRIIGLTGSIASGKSTVSAMLREPGAAVIDADAIVHHLQLPGTPVFESIVREFGPGVVRPDGSLDRQALGRIVFADPGRRRALEAIVHPAVRAEIWRQVEQYRREGRPAVVLDVPLLYESGWDRQVDEVWVVWVDAETQKARLIARSGLSPEEAEARIAAQMSLDEKARRADRIIDNRGSLDRTRAQVEAAWRAACGGEGGEPAAGSSAHHGAGSVDPGAGPCDGPGAAPEAERRGGDR</sequence>
<dbReference type="EC" id="2.7.1.24" evidence="1"/>
<dbReference type="EMBL" id="AP006840">
    <property type="protein sequence ID" value="BAD39836.1"/>
    <property type="molecule type" value="Genomic_DNA"/>
</dbReference>
<dbReference type="RefSeq" id="WP_011194983.1">
    <property type="nucleotide sequence ID" value="NC_006177.1"/>
</dbReference>
<dbReference type="SMR" id="Q67R57"/>
<dbReference type="STRING" id="292459.STH851"/>
<dbReference type="KEGG" id="sth:STH851"/>
<dbReference type="eggNOG" id="COG0237">
    <property type="taxonomic scope" value="Bacteria"/>
</dbReference>
<dbReference type="HOGENOM" id="CLU_057180_1_1_9"/>
<dbReference type="OrthoDB" id="9812943at2"/>
<dbReference type="UniPathway" id="UPA00241">
    <property type="reaction ID" value="UER00356"/>
</dbReference>
<dbReference type="Proteomes" id="UP000000417">
    <property type="component" value="Chromosome"/>
</dbReference>
<dbReference type="GO" id="GO:0005737">
    <property type="term" value="C:cytoplasm"/>
    <property type="evidence" value="ECO:0007669"/>
    <property type="project" value="UniProtKB-SubCell"/>
</dbReference>
<dbReference type="GO" id="GO:0005524">
    <property type="term" value="F:ATP binding"/>
    <property type="evidence" value="ECO:0007669"/>
    <property type="project" value="UniProtKB-UniRule"/>
</dbReference>
<dbReference type="GO" id="GO:0004140">
    <property type="term" value="F:dephospho-CoA kinase activity"/>
    <property type="evidence" value="ECO:0007669"/>
    <property type="project" value="UniProtKB-UniRule"/>
</dbReference>
<dbReference type="GO" id="GO:0015937">
    <property type="term" value="P:coenzyme A biosynthetic process"/>
    <property type="evidence" value="ECO:0007669"/>
    <property type="project" value="UniProtKB-UniRule"/>
</dbReference>
<dbReference type="CDD" id="cd02022">
    <property type="entry name" value="DPCK"/>
    <property type="match status" value="1"/>
</dbReference>
<dbReference type="FunFam" id="3.40.50.300:FF:000991">
    <property type="entry name" value="Dephospho-CoA kinase"/>
    <property type="match status" value="1"/>
</dbReference>
<dbReference type="Gene3D" id="3.40.50.300">
    <property type="entry name" value="P-loop containing nucleotide triphosphate hydrolases"/>
    <property type="match status" value="1"/>
</dbReference>
<dbReference type="HAMAP" id="MF_00376">
    <property type="entry name" value="Dephospho_CoA_kinase"/>
    <property type="match status" value="1"/>
</dbReference>
<dbReference type="InterPro" id="IPR001977">
    <property type="entry name" value="Depp_CoAkinase"/>
</dbReference>
<dbReference type="InterPro" id="IPR027417">
    <property type="entry name" value="P-loop_NTPase"/>
</dbReference>
<dbReference type="NCBIfam" id="TIGR00152">
    <property type="entry name" value="dephospho-CoA kinase"/>
    <property type="match status" value="1"/>
</dbReference>
<dbReference type="PANTHER" id="PTHR10695:SF46">
    <property type="entry name" value="BIFUNCTIONAL COENZYME A SYNTHASE-RELATED"/>
    <property type="match status" value="1"/>
</dbReference>
<dbReference type="PANTHER" id="PTHR10695">
    <property type="entry name" value="DEPHOSPHO-COA KINASE-RELATED"/>
    <property type="match status" value="1"/>
</dbReference>
<dbReference type="Pfam" id="PF01121">
    <property type="entry name" value="CoaE"/>
    <property type="match status" value="1"/>
</dbReference>
<dbReference type="SUPFAM" id="SSF52540">
    <property type="entry name" value="P-loop containing nucleoside triphosphate hydrolases"/>
    <property type="match status" value="1"/>
</dbReference>
<dbReference type="PROSITE" id="PS51219">
    <property type="entry name" value="DPCK"/>
    <property type="match status" value="1"/>
</dbReference>
<evidence type="ECO:0000255" key="1">
    <source>
        <dbReference type="HAMAP-Rule" id="MF_00376"/>
    </source>
</evidence>
<evidence type="ECO:0000256" key="2">
    <source>
        <dbReference type="SAM" id="MobiDB-lite"/>
    </source>
</evidence>